<evidence type="ECO:0000255" key="1">
    <source>
        <dbReference type="PROSITE-ProRule" id="PRU00190"/>
    </source>
</evidence>
<evidence type="ECO:0000255" key="2">
    <source>
        <dbReference type="PROSITE-ProRule" id="PRU00339"/>
    </source>
</evidence>
<evidence type="ECO:0000269" key="3">
    <source>
    </source>
</evidence>
<evidence type="ECO:0000303" key="4">
    <source>
    </source>
</evidence>
<evidence type="ECO:0000305" key="5">
    <source>
    </source>
</evidence>
<name>GRA4_GIBZE</name>
<comment type="function">
    <text evidence="3 5">Methyltransferase; part of the gene cluster that mediates the biosynthesis of gramillins A and B, bicyclic lipopeptides that induce cell death in maize leaves but not in wheat leaves (PubMed:30395461). The nonribosomal peptide synthetase GRA1 incorporates respectively a glutamic adic (Glu), a leucine (Leu), a serine (Ser), a hydroxyglutamine (HOGln), a 2-amino decanoic acid, and 2 cysteins (CysB and CysA) (Probable). The biosynthesis of 2-amino decanoic acid incorporated in gramillins could be initiated by a fatty acid synthase composed of the alpha and beta subunits FGSG_00036 and FGSG_11656 (Probable). The cytochrome P450 monooxygenase FGSG_15680 could hydroxylate the fatty acid chain (Probable). Subsequent oxidation to the ketone by the oxidoreductase FGSG_00048 and transamination by aminotransferase FGSG_00049 could form 2-amino-decanoic acid (Probable). On the other hand, FGSG_15680 could also be responsible for the HO-modified glutamine at the gamma-position (Probable). Whether hydroxylation occurs on the fully assembled product or on the Gln residue prior to assembly into the gramillins requires further proof (Probable). The thioredoxin FGSG_00043 could also be required for the disulfide-bond formation between CysA and CysB (Probable). The specific involvement of the remaining proteins from the cluster is more difficult to discern, but could have broader regulatory (FGSG_00040 and FGSG_11657) or enzymatic functions (FGSG_00044 and FGSG_00045) (Probable). The final C-domain of GRA1 does not possess the expected sequence of a termination CT domain, often implicated in macrocyclization and release of a cyclopeptidein fungal NRPs; and the thioesterase FGSG_00047 may act in concert with the terminal C-domain of GRA1 to catalyze the formation of the macrocyclic anhydride and release of the products (Probable).</text>
</comment>
<comment type="pathway">
    <text evidence="5">Mycotoxin biosynthesis.</text>
</comment>
<comment type="similarity">
    <text evidence="1">Belongs to the class V-like SAM-binding methyltransferase superfamily.</text>
</comment>
<gene>
    <name type="ORF">FG00040</name>
    <name type="ORF">FGRAMPH1_01T00137</name>
    <name type="ORF">FGSG_00040</name>
</gene>
<accession>I1R9A9</accession>
<protein>
    <recommendedName>
        <fullName evidence="4">Methyltransferase FGSG_00040</fullName>
        <ecNumber evidence="1">2.1.1.-</ecNumber>
    </recommendedName>
    <alternativeName>
        <fullName evidence="4">Gramillins biosynthetic cluster protein FGSG_00040</fullName>
    </alternativeName>
</protein>
<feature type="chain" id="PRO_0000450569" description="Methyltransferase FGSG_00040">
    <location>
        <begin position="1"/>
        <end position="726"/>
    </location>
</feature>
<feature type="repeat" description="TPR">
    <location>
        <begin position="187"/>
        <end position="220"/>
    </location>
</feature>
<feature type="repeat" description="TPR">
    <location>
        <begin position="224"/>
        <end position="257"/>
    </location>
</feature>
<feature type="repeat" description="TPR" evidence="2">
    <location>
        <begin position="258"/>
        <end position="291"/>
    </location>
</feature>
<feature type="domain" description="SET" evidence="1">
    <location>
        <begin position="336"/>
        <end position="531"/>
    </location>
</feature>
<feature type="binding site" evidence="1">
    <location>
        <position position="530"/>
    </location>
    <ligand>
        <name>S-adenosyl-L-methionine</name>
        <dbReference type="ChEBI" id="CHEBI:59789"/>
    </ligand>
</feature>
<reference key="1">
    <citation type="journal article" date="2007" name="Science">
        <title>The Fusarium graminearum genome reveals a link between localized polymorphism and pathogen specialization.</title>
        <authorList>
            <person name="Cuomo C.A."/>
            <person name="Gueldener U."/>
            <person name="Xu J.-R."/>
            <person name="Trail F."/>
            <person name="Turgeon B.G."/>
            <person name="Di Pietro A."/>
            <person name="Walton J.D."/>
            <person name="Ma L.-J."/>
            <person name="Baker S.E."/>
            <person name="Rep M."/>
            <person name="Adam G."/>
            <person name="Antoniw J."/>
            <person name="Baldwin T."/>
            <person name="Calvo S.E."/>
            <person name="Chang Y.-L."/>
            <person name="DeCaprio D."/>
            <person name="Gale L.R."/>
            <person name="Gnerre S."/>
            <person name="Goswami R.S."/>
            <person name="Hammond-Kosack K."/>
            <person name="Harris L.J."/>
            <person name="Hilburn K."/>
            <person name="Kennell J.C."/>
            <person name="Kroken S."/>
            <person name="Magnuson J.K."/>
            <person name="Mannhaupt G."/>
            <person name="Mauceli E.W."/>
            <person name="Mewes H.-W."/>
            <person name="Mitterbauer R."/>
            <person name="Muehlbauer G."/>
            <person name="Muensterkoetter M."/>
            <person name="Nelson D."/>
            <person name="O'Donnell K."/>
            <person name="Ouellet T."/>
            <person name="Qi W."/>
            <person name="Quesneville H."/>
            <person name="Roncero M.I.G."/>
            <person name="Seong K.-Y."/>
            <person name="Tetko I.V."/>
            <person name="Urban M."/>
            <person name="Waalwijk C."/>
            <person name="Ward T.J."/>
            <person name="Yao J."/>
            <person name="Birren B.W."/>
            <person name="Kistler H.C."/>
        </authorList>
    </citation>
    <scope>NUCLEOTIDE SEQUENCE [LARGE SCALE GENOMIC DNA]</scope>
    <source>
        <strain>ATCC MYA-4620 / CBS 123657 / FGSC 9075 / NRRL 31084 / PH-1</strain>
    </source>
</reference>
<reference key="2">
    <citation type="journal article" date="2010" name="Nature">
        <title>Comparative genomics reveals mobile pathogenicity chromosomes in Fusarium.</title>
        <authorList>
            <person name="Ma L.-J."/>
            <person name="van der Does H.C."/>
            <person name="Borkovich K.A."/>
            <person name="Coleman J.J."/>
            <person name="Daboussi M.-J."/>
            <person name="Di Pietro A."/>
            <person name="Dufresne M."/>
            <person name="Freitag M."/>
            <person name="Grabherr M."/>
            <person name="Henrissat B."/>
            <person name="Houterman P.M."/>
            <person name="Kang S."/>
            <person name="Shim W.-B."/>
            <person name="Woloshuk C."/>
            <person name="Xie X."/>
            <person name="Xu J.-R."/>
            <person name="Antoniw J."/>
            <person name="Baker S.E."/>
            <person name="Bluhm B.H."/>
            <person name="Breakspear A."/>
            <person name="Brown D.W."/>
            <person name="Butchko R.A.E."/>
            <person name="Chapman S."/>
            <person name="Coulson R."/>
            <person name="Coutinho P.M."/>
            <person name="Danchin E.G.J."/>
            <person name="Diener A."/>
            <person name="Gale L.R."/>
            <person name="Gardiner D.M."/>
            <person name="Goff S."/>
            <person name="Hammond-Kosack K.E."/>
            <person name="Hilburn K."/>
            <person name="Hua-Van A."/>
            <person name="Jonkers W."/>
            <person name="Kazan K."/>
            <person name="Kodira C.D."/>
            <person name="Koehrsen M."/>
            <person name="Kumar L."/>
            <person name="Lee Y.-H."/>
            <person name="Li L."/>
            <person name="Manners J.M."/>
            <person name="Miranda-Saavedra D."/>
            <person name="Mukherjee M."/>
            <person name="Park G."/>
            <person name="Park J."/>
            <person name="Park S.-Y."/>
            <person name="Proctor R.H."/>
            <person name="Regev A."/>
            <person name="Ruiz-Roldan M.C."/>
            <person name="Sain D."/>
            <person name="Sakthikumar S."/>
            <person name="Sykes S."/>
            <person name="Schwartz D.C."/>
            <person name="Turgeon B.G."/>
            <person name="Wapinski I."/>
            <person name="Yoder O."/>
            <person name="Young S."/>
            <person name="Zeng Q."/>
            <person name="Zhou S."/>
            <person name="Galagan J."/>
            <person name="Cuomo C.A."/>
            <person name="Kistler H.C."/>
            <person name="Rep M."/>
        </authorList>
    </citation>
    <scope>GENOME REANNOTATION</scope>
    <source>
        <strain>ATCC MYA-4620 / CBS 123657 / FGSC 9075 / NRRL 31084 / PH-1</strain>
    </source>
</reference>
<reference key="3">
    <citation type="journal article" date="2015" name="BMC Genomics">
        <title>The completed genome sequence of the pathogenic ascomycete fungus Fusarium graminearum.</title>
        <authorList>
            <person name="King R."/>
            <person name="Urban M."/>
            <person name="Hammond-Kosack M.C.U."/>
            <person name="Hassani-Pak K."/>
            <person name="Hammond-Kosack K.E."/>
        </authorList>
    </citation>
    <scope>NUCLEOTIDE SEQUENCE [LARGE SCALE GENOMIC DNA]</scope>
    <source>
        <strain>ATCC MYA-4620 / CBS 123657 / FGSC 9075 / NRRL 31084 / PH-1</strain>
    </source>
</reference>
<reference key="4">
    <citation type="journal article" date="2018" name="J. Am. Chem. Soc.">
        <title>Gramillin A and B: cyclic lipopeptides identified as the nonribosomal biosynthetic products of Fusarium graminearum.</title>
        <authorList>
            <person name="Bahadoor A."/>
            <person name="Brauer E.K."/>
            <person name="Bosnich W."/>
            <person name="Schneiderman D."/>
            <person name="Johnston A."/>
            <person name="Aubin Y."/>
            <person name="Blackwell B."/>
            <person name="Melanson J.E."/>
            <person name="Harris L.J."/>
        </authorList>
    </citation>
    <scope>FUNCTION</scope>
    <scope>PATHWAY</scope>
</reference>
<sequence>MDIKDVSNESKYIDYLKQLQGAAERAARRKGQALMANSYRSQSDENTIATTLVPAPYPPCIVSANDLEAIMISDMRLETHHRGKKIMLRVLTPPDRMTAVMAIVEDEKGIAVLLQLYHQPEESIVPATEILSPNMVCILKEPFFKCATDGTYSLRVDHPGDIIWMDGADDRIPSHWRPSMVILGENSSDIRKQGKGAVQSKKWAEALRLYSSAIQAGQNVQERQLAFLNRSFVNMNMDRPKQALLDAEKATNPAMPSEKSLFRKARALYELGDYQQSLEMLEKLTQSYPENKAASSEKDRLNERLNEQRTGEYKFKQMYKQAEKTPPLIDCVTFSAPVEIRESPGRGKALFTTKAVSAGELLLCKKAFSYSFAGDEQSTKQTKILMNLATKRVVVGGQARLLTLIMQKLYHNSSLSAEFGDLHHADYQKAMVLETDGTPVVDSFLVEKIASLNGFGAPRTSRESFLQVLSSNRDMTGDEGFKYTTSGIWLLASRINHSCVGNCRPSFIGDMQIVRATKDVPAKTEIFFCYRPPVPFESYQETQKGLNHWGFTCDCGLCLRKKATSKAVFQRRKVLADDLQRLLDYPGSGNEAKSSRLMKALEKTYLTNNDCAIRLELWEPYFAFGAHLLKNNQLDIAAKMILKGLEALVHSIIACPPNDITDGPRLKVERWGVANDAVPWAFKNLANVYGQLAPELCSAAENYAEVSYTMVVGEKETWPEVLSSSS</sequence>
<dbReference type="EC" id="2.1.1.-" evidence="1"/>
<dbReference type="EMBL" id="HG970332">
    <property type="protein sequence ID" value="CEF71868.1"/>
    <property type="molecule type" value="Genomic_DNA"/>
</dbReference>
<dbReference type="RefSeq" id="XP_011315627.1">
    <property type="nucleotide sequence ID" value="XM_011317325.1"/>
</dbReference>
<dbReference type="SMR" id="I1R9A9"/>
<dbReference type="STRING" id="229533.I1R9A9"/>
<dbReference type="GeneID" id="23547558"/>
<dbReference type="KEGG" id="fgr:FGSG_00040"/>
<dbReference type="VEuPathDB" id="FungiDB:FGRAMPH1_01G00137"/>
<dbReference type="eggNOG" id="KOG2084">
    <property type="taxonomic scope" value="Eukaryota"/>
</dbReference>
<dbReference type="HOGENOM" id="CLU_009043_2_0_1"/>
<dbReference type="InParanoid" id="I1R9A9"/>
<dbReference type="OrthoDB" id="30407at110618"/>
<dbReference type="Proteomes" id="UP000070720">
    <property type="component" value="Chromosome 1"/>
</dbReference>
<dbReference type="GO" id="GO:0008168">
    <property type="term" value="F:methyltransferase activity"/>
    <property type="evidence" value="ECO:0007669"/>
    <property type="project" value="UniProtKB-KW"/>
</dbReference>
<dbReference type="GO" id="GO:0032259">
    <property type="term" value="P:methylation"/>
    <property type="evidence" value="ECO:0007669"/>
    <property type="project" value="UniProtKB-KW"/>
</dbReference>
<dbReference type="CDD" id="cd20071">
    <property type="entry name" value="SET_SMYD"/>
    <property type="match status" value="1"/>
</dbReference>
<dbReference type="Gene3D" id="2.170.270.10">
    <property type="entry name" value="SET domain"/>
    <property type="match status" value="1"/>
</dbReference>
<dbReference type="Gene3D" id="1.25.40.10">
    <property type="entry name" value="Tetratricopeptide repeat domain"/>
    <property type="match status" value="1"/>
</dbReference>
<dbReference type="InterPro" id="IPR053209">
    <property type="entry name" value="Gramillin-biosynth_MTr"/>
</dbReference>
<dbReference type="InterPro" id="IPR001214">
    <property type="entry name" value="SET_dom"/>
</dbReference>
<dbReference type="InterPro" id="IPR046341">
    <property type="entry name" value="SET_dom_sf"/>
</dbReference>
<dbReference type="InterPro" id="IPR011990">
    <property type="entry name" value="TPR-like_helical_dom_sf"/>
</dbReference>
<dbReference type="InterPro" id="IPR019734">
    <property type="entry name" value="TPR_rpt"/>
</dbReference>
<dbReference type="PANTHER" id="PTHR47643">
    <property type="entry name" value="TPR DOMAIN PROTEIN (AFU_ORTHOLOGUE AFUA_5G12710)"/>
    <property type="match status" value="1"/>
</dbReference>
<dbReference type="PANTHER" id="PTHR47643:SF2">
    <property type="entry name" value="TPR DOMAIN PROTEIN (AFU_ORTHOLOGUE AFUA_5G12710)"/>
    <property type="match status" value="1"/>
</dbReference>
<dbReference type="Pfam" id="PF00856">
    <property type="entry name" value="SET"/>
    <property type="match status" value="1"/>
</dbReference>
<dbReference type="Pfam" id="PF13174">
    <property type="entry name" value="TPR_6"/>
    <property type="match status" value="1"/>
</dbReference>
<dbReference type="SMART" id="SM00317">
    <property type="entry name" value="SET"/>
    <property type="match status" value="1"/>
</dbReference>
<dbReference type="SUPFAM" id="SSF82199">
    <property type="entry name" value="SET domain"/>
    <property type="match status" value="1"/>
</dbReference>
<dbReference type="SUPFAM" id="SSF48452">
    <property type="entry name" value="TPR-like"/>
    <property type="match status" value="1"/>
</dbReference>
<dbReference type="PROSITE" id="PS50280">
    <property type="entry name" value="SET"/>
    <property type="match status" value="1"/>
</dbReference>
<dbReference type="PROSITE" id="PS50005">
    <property type="entry name" value="TPR"/>
    <property type="match status" value="1"/>
</dbReference>
<dbReference type="PROSITE" id="PS50293">
    <property type="entry name" value="TPR_REGION"/>
    <property type="match status" value="1"/>
</dbReference>
<organism>
    <name type="scientific">Gibberella zeae (strain ATCC MYA-4620 / CBS 123657 / FGSC 9075 / NRRL 31084 / PH-1)</name>
    <name type="common">Wheat head blight fungus</name>
    <name type="synonym">Fusarium graminearum</name>
    <dbReference type="NCBI Taxonomy" id="229533"/>
    <lineage>
        <taxon>Eukaryota</taxon>
        <taxon>Fungi</taxon>
        <taxon>Dikarya</taxon>
        <taxon>Ascomycota</taxon>
        <taxon>Pezizomycotina</taxon>
        <taxon>Sordariomycetes</taxon>
        <taxon>Hypocreomycetidae</taxon>
        <taxon>Hypocreales</taxon>
        <taxon>Nectriaceae</taxon>
        <taxon>Fusarium</taxon>
    </lineage>
</organism>
<proteinExistence type="inferred from homology"/>
<keyword id="KW-0489">Methyltransferase</keyword>
<keyword id="KW-1185">Reference proteome</keyword>
<keyword id="KW-0677">Repeat</keyword>
<keyword id="KW-0949">S-adenosyl-L-methionine</keyword>
<keyword id="KW-0802">TPR repeat</keyword>
<keyword id="KW-0808">Transferase</keyword>
<keyword id="KW-0843">Virulence</keyword>